<organism>
    <name type="scientific">Bacillus mycoides (strain KBAB4)</name>
    <name type="common">Bacillus weihenstephanensis</name>
    <dbReference type="NCBI Taxonomy" id="315730"/>
    <lineage>
        <taxon>Bacteria</taxon>
        <taxon>Bacillati</taxon>
        <taxon>Bacillota</taxon>
        <taxon>Bacilli</taxon>
        <taxon>Bacillales</taxon>
        <taxon>Bacillaceae</taxon>
        <taxon>Bacillus</taxon>
        <taxon>Bacillus cereus group</taxon>
    </lineage>
</organism>
<proteinExistence type="inferred from homology"/>
<reference key="1">
    <citation type="journal article" date="2008" name="Chem. Biol. Interact.">
        <title>Extending the Bacillus cereus group genomics to putative food-borne pathogens of different toxicity.</title>
        <authorList>
            <person name="Lapidus A."/>
            <person name="Goltsman E."/>
            <person name="Auger S."/>
            <person name="Galleron N."/>
            <person name="Segurens B."/>
            <person name="Dossat C."/>
            <person name="Land M.L."/>
            <person name="Broussolle V."/>
            <person name="Brillard J."/>
            <person name="Guinebretiere M.-H."/>
            <person name="Sanchis V."/>
            <person name="Nguen-the C."/>
            <person name="Lereclus D."/>
            <person name="Richardson P."/>
            <person name="Wincker P."/>
            <person name="Weissenbach J."/>
            <person name="Ehrlich S.D."/>
            <person name="Sorokin A."/>
        </authorList>
    </citation>
    <scope>NUCLEOTIDE SEQUENCE [LARGE SCALE GENOMIC DNA]</scope>
    <source>
        <strain>KBAB4</strain>
    </source>
</reference>
<protein>
    <recommendedName>
        <fullName evidence="1">dTTP/UTP pyrophosphatase</fullName>
        <shortName evidence="1">dTTPase/UTPase</shortName>
        <ecNumber evidence="1">3.6.1.9</ecNumber>
    </recommendedName>
    <alternativeName>
        <fullName evidence="1">Nucleoside triphosphate pyrophosphatase</fullName>
    </alternativeName>
    <alternativeName>
        <fullName evidence="1">Nucleotide pyrophosphatase</fullName>
        <shortName evidence="1">Nucleotide PPase</shortName>
    </alternativeName>
</protein>
<sequence>MRKIILASGSPRRKELLELADVPFEIVVSEVEETIGAYSSPSDIVMSLALQKASAVAENHSNQVVLGADTIVTYDSRILGKPSNEAEAKEMLRLLSGKTHEVYTGVAIISKEKTVTFYERTEVTFWGLTEEEIDVYVASKEPLDKAGSYGIQGKGSIFVQHIQGDYYSVVGLPIARLVRELKQFDSDVTHA</sequence>
<gene>
    <name type="primary">maf</name>
    <name type="ordered locus">BcerKBAB4_4300</name>
</gene>
<comment type="function">
    <text evidence="1">Nucleoside triphosphate pyrophosphatase that hydrolyzes dTTP and UTP. May have a dual role in cell division arrest and in preventing the incorporation of modified nucleotides into cellular nucleic acids.</text>
</comment>
<comment type="catalytic activity">
    <reaction evidence="1">
        <text>dTTP + H2O = dTMP + diphosphate + H(+)</text>
        <dbReference type="Rhea" id="RHEA:28534"/>
        <dbReference type="ChEBI" id="CHEBI:15377"/>
        <dbReference type="ChEBI" id="CHEBI:15378"/>
        <dbReference type="ChEBI" id="CHEBI:33019"/>
        <dbReference type="ChEBI" id="CHEBI:37568"/>
        <dbReference type="ChEBI" id="CHEBI:63528"/>
        <dbReference type="EC" id="3.6.1.9"/>
    </reaction>
</comment>
<comment type="catalytic activity">
    <reaction evidence="1">
        <text>UTP + H2O = UMP + diphosphate + H(+)</text>
        <dbReference type="Rhea" id="RHEA:29395"/>
        <dbReference type="ChEBI" id="CHEBI:15377"/>
        <dbReference type="ChEBI" id="CHEBI:15378"/>
        <dbReference type="ChEBI" id="CHEBI:33019"/>
        <dbReference type="ChEBI" id="CHEBI:46398"/>
        <dbReference type="ChEBI" id="CHEBI:57865"/>
        <dbReference type="EC" id="3.6.1.9"/>
    </reaction>
</comment>
<comment type="cofactor">
    <cofactor evidence="1">
        <name>a divalent metal cation</name>
        <dbReference type="ChEBI" id="CHEBI:60240"/>
    </cofactor>
</comment>
<comment type="subcellular location">
    <subcellularLocation>
        <location evidence="1">Cytoplasm</location>
    </subcellularLocation>
</comment>
<comment type="similarity">
    <text evidence="1">Belongs to the Maf family. YhdE subfamily.</text>
</comment>
<evidence type="ECO:0000255" key="1">
    <source>
        <dbReference type="HAMAP-Rule" id="MF_00528"/>
    </source>
</evidence>
<dbReference type="EC" id="3.6.1.9" evidence="1"/>
<dbReference type="EMBL" id="CP000903">
    <property type="protein sequence ID" value="ABY45459.1"/>
    <property type="molecule type" value="Genomic_DNA"/>
</dbReference>
<dbReference type="RefSeq" id="WP_012261761.1">
    <property type="nucleotide sequence ID" value="NC_010184.1"/>
</dbReference>
<dbReference type="SMR" id="A9VIS9"/>
<dbReference type="KEGG" id="bwe:BcerKBAB4_4300"/>
<dbReference type="eggNOG" id="COG0424">
    <property type="taxonomic scope" value="Bacteria"/>
</dbReference>
<dbReference type="HOGENOM" id="CLU_040416_0_0_9"/>
<dbReference type="Proteomes" id="UP000002154">
    <property type="component" value="Chromosome"/>
</dbReference>
<dbReference type="GO" id="GO:0005737">
    <property type="term" value="C:cytoplasm"/>
    <property type="evidence" value="ECO:0007669"/>
    <property type="project" value="UniProtKB-SubCell"/>
</dbReference>
<dbReference type="GO" id="GO:0036218">
    <property type="term" value="F:dTTP diphosphatase activity"/>
    <property type="evidence" value="ECO:0007669"/>
    <property type="project" value="RHEA"/>
</dbReference>
<dbReference type="GO" id="GO:0036221">
    <property type="term" value="F:UTP diphosphatase activity"/>
    <property type="evidence" value="ECO:0007669"/>
    <property type="project" value="RHEA"/>
</dbReference>
<dbReference type="GO" id="GO:0009117">
    <property type="term" value="P:nucleotide metabolic process"/>
    <property type="evidence" value="ECO:0007669"/>
    <property type="project" value="UniProtKB-KW"/>
</dbReference>
<dbReference type="CDD" id="cd00555">
    <property type="entry name" value="Maf"/>
    <property type="match status" value="1"/>
</dbReference>
<dbReference type="FunFam" id="3.90.950.10:FF:000007">
    <property type="entry name" value="dTTP/UTP pyrophosphatase"/>
    <property type="match status" value="1"/>
</dbReference>
<dbReference type="Gene3D" id="3.90.950.10">
    <property type="match status" value="1"/>
</dbReference>
<dbReference type="HAMAP" id="MF_00528">
    <property type="entry name" value="Maf"/>
    <property type="match status" value="1"/>
</dbReference>
<dbReference type="InterPro" id="IPR029001">
    <property type="entry name" value="ITPase-like_fam"/>
</dbReference>
<dbReference type="InterPro" id="IPR003697">
    <property type="entry name" value="Maf-like"/>
</dbReference>
<dbReference type="NCBIfam" id="TIGR00172">
    <property type="entry name" value="maf"/>
    <property type="match status" value="1"/>
</dbReference>
<dbReference type="PANTHER" id="PTHR43213">
    <property type="entry name" value="BIFUNCTIONAL DTTP/UTP PYROPHOSPHATASE/METHYLTRANSFERASE PROTEIN-RELATED"/>
    <property type="match status" value="1"/>
</dbReference>
<dbReference type="PANTHER" id="PTHR43213:SF5">
    <property type="entry name" value="BIFUNCTIONAL DTTP_UTP PYROPHOSPHATASE_METHYLTRANSFERASE PROTEIN-RELATED"/>
    <property type="match status" value="1"/>
</dbReference>
<dbReference type="Pfam" id="PF02545">
    <property type="entry name" value="Maf"/>
    <property type="match status" value="1"/>
</dbReference>
<dbReference type="PIRSF" id="PIRSF006305">
    <property type="entry name" value="Maf"/>
    <property type="match status" value="1"/>
</dbReference>
<dbReference type="SUPFAM" id="SSF52972">
    <property type="entry name" value="ITPase-like"/>
    <property type="match status" value="1"/>
</dbReference>
<name>NTPPA_BACMK</name>
<feature type="chain" id="PRO_1000127773" description="dTTP/UTP pyrophosphatase">
    <location>
        <begin position="1"/>
        <end position="191"/>
    </location>
</feature>
<feature type="active site" description="Proton acceptor" evidence="1">
    <location>
        <position position="69"/>
    </location>
</feature>
<feature type="site" description="Important for substrate specificity" evidence="1">
    <location>
        <position position="12"/>
    </location>
</feature>
<feature type="site" description="Important for substrate specificity" evidence="1">
    <location>
        <position position="70"/>
    </location>
</feature>
<feature type="site" description="Important for substrate specificity" evidence="1">
    <location>
        <position position="152"/>
    </location>
</feature>
<keyword id="KW-0963">Cytoplasm</keyword>
<keyword id="KW-0378">Hydrolase</keyword>
<keyword id="KW-0546">Nucleotide metabolism</keyword>
<accession>A9VIS9</accession>